<organism>
    <name type="scientific">Eremothecium gossypii (strain ATCC 10895 / CBS 109.51 / FGSC 9923 / NRRL Y-1056)</name>
    <name type="common">Yeast</name>
    <name type="synonym">Ashbya gossypii</name>
    <dbReference type="NCBI Taxonomy" id="284811"/>
    <lineage>
        <taxon>Eukaryota</taxon>
        <taxon>Fungi</taxon>
        <taxon>Dikarya</taxon>
        <taxon>Ascomycota</taxon>
        <taxon>Saccharomycotina</taxon>
        <taxon>Saccharomycetes</taxon>
        <taxon>Saccharomycetales</taxon>
        <taxon>Saccharomycetaceae</taxon>
        <taxon>Eremothecium</taxon>
    </lineage>
</organism>
<gene>
    <name type="primary">HRD1</name>
    <name type="ordered locus">ACL019C</name>
</gene>
<proteinExistence type="inferred from homology"/>
<accession>Q75CC8</accession>
<protein>
    <recommendedName>
        <fullName>ERAD-associated E3 ubiquitin-protein ligase HRD1</fullName>
        <ecNumber>2.3.2.27</ecNumber>
    </recommendedName>
    <alternativeName>
        <fullName evidence="4">RING-type E3 ubiquitin transferase HRD1</fullName>
    </alternativeName>
</protein>
<feature type="chain" id="PRO_0000240366" description="ERAD-associated E3 ubiquitin-protein ligase HRD1">
    <location>
        <begin position="1"/>
        <end position="575"/>
    </location>
</feature>
<feature type="topological domain" description="Cytoplasmic" evidence="1">
    <location>
        <begin position="1"/>
        <end position="4"/>
    </location>
</feature>
<feature type="transmembrane region" description="Helical; Name=1">
    <location>
        <begin position="5"/>
        <end position="25"/>
    </location>
</feature>
<feature type="topological domain" description="Lumenal" evidence="1">
    <location>
        <begin position="26"/>
        <end position="46"/>
    </location>
</feature>
<feature type="transmembrane region" description="Helical; Name=2">
    <location>
        <begin position="47"/>
        <end position="67"/>
    </location>
</feature>
<feature type="topological domain" description="Cytoplasmic" evidence="1">
    <location>
        <begin position="68"/>
        <end position="79"/>
    </location>
</feature>
<feature type="transmembrane region" description="Helical; Name=3">
    <location>
        <begin position="80"/>
        <end position="100"/>
    </location>
</feature>
<feature type="topological domain" description="Lumenal" evidence="1">
    <location>
        <begin position="101"/>
        <end position="103"/>
    </location>
</feature>
<feature type="transmembrane region" description="Helical; Name=4">
    <location>
        <begin position="104"/>
        <end position="124"/>
    </location>
</feature>
<feature type="topological domain" description="Cytoplasmic" evidence="1">
    <location>
        <begin position="125"/>
        <end position="138"/>
    </location>
</feature>
<feature type="transmembrane region" description="Helical; Name=5">
    <location>
        <begin position="139"/>
        <end position="159"/>
    </location>
</feature>
<feature type="topological domain" description="Lumenal" evidence="1">
    <location>
        <begin position="160"/>
        <end position="179"/>
    </location>
</feature>
<feature type="transmembrane region" description="Helical; Name=6">
    <location>
        <begin position="180"/>
        <end position="200"/>
    </location>
</feature>
<feature type="topological domain" description="Cytoplasmic" evidence="1">
    <location>
        <begin position="201"/>
        <end position="575"/>
    </location>
</feature>
<feature type="zinc finger region" description="RING-type; atypical" evidence="2">
    <location>
        <begin position="320"/>
        <end position="368"/>
    </location>
</feature>
<feature type="region of interest" description="Disordered" evidence="3">
    <location>
        <begin position="486"/>
        <end position="520"/>
    </location>
</feature>
<evidence type="ECO:0000250" key="1"/>
<evidence type="ECO:0000255" key="2">
    <source>
        <dbReference type="PROSITE-ProRule" id="PRU00175"/>
    </source>
</evidence>
<evidence type="ECO:0000256" key="3">
    <source>
        <dbReference type="SAM" id="MobiDB-lite"/>
    </source>
</evidence>
<evidence type="ECO:0000305" key="4"/>
<sequence>MPREVSWPMWAMFITATYALAGWSAYSCATSFDDPLSALFMASSGVHFVIWGNFLIVHYCLFVWAIIRVLFGQLTAIEYDHIFERLHVVLVTLASIVITMRKTYMAGHMTILFYTLCLVAHWVLRDRMDFVFQVHGTDSSLLGILCSRFMFSLLVLGMVDYKMLKFCVQNTNVDGKRHDLYLMLALSFAQLILDVLHVVLLTSLNLFEMVRSRRTRSANLVYEGGTTDDDADDEVFILEGKYIYETVFDLTITVLKVILDIIQEVFVPWSITVVYSIFVRSIKAGESFLLVYNYWKNNKKLYEKLSDVSEEQLDDTDSMCIICMDDMLPTTETTKMNRRAKMLPCGHMLHFGCLKSWMERSQTCPICRLSVFANDSNSHATTQAREQTPPDLLQERGIDEHIDVIGMQDMSVQSISLHEGTAVRRGTTGNCMNQAYDGGLLSHEERDQAGWVAFPIEFRADNKVFFNLNDSQGDRQWMASYTSYPRQNMVNSDDPDNASESHSRIPSPSLPGSLEGTSSQVDVTVSAKDAPANACFVIATSKLEQTKEVEHLKRKVEELESRVEELSKRIKTDQV</sequence>
<comment type="function">
    <text evidence="1">E3 ubiquitin-protein ligase which accepts ubiquitin specifically from endoplasmic reticulum-associated E2 ligases, and transfers it to substrates promoting their degradation. Mediates the degradation of endoplasmic reticulum proteins (ERQC), also called ER-associated degradation (ERAD). Component of the HRD1 ubiquitin ligase complex, which is part of the ERAD-L and ERAD-M pathways responsible for the rapid degradation of soluble lumenal and membrane proteins with misfolded lumenal domains (ERAD-L), or ER-membrane proteins with misfolded transmembrane domains (ERAD-M) (By similarity).</text>
</comment>
<comment type="catalytic activity">
    <reaction>
        <text>S-ubiquitinyl-[E2 ubiquitin-conjugating enzyme]-L-cysteine + [acceptor protein]-L-lysine = [E2 ubiquitin-conjugating enzyme]-L-cysteine + N(6)-ubiquitinyl-[acceptor protein]-L-lysine.</text>
        <dbReference type="EC" id="2.3.2.27"/>
    </reaction>
</comment>
<comment type="pathway">
    <text>Protein modification; protein ubiquitination.</text>
</comment>
<comment type="subunit">
    <text evidence="1">Interacts with HRD3.</text>
</comment>
<comment type="subcellular location">
    <subcellularLocation>
        <location evidence="1">Endoplasmic reticulum membrane</location>
        <topology evidence="1">Multi-pass membrane protein</topology>
    </subcellularLocation>
</comment>
<comment type="similarity">
    <text evidence="4">Belongs to the HRD1 family.</text>
</comment>
<reference key="1">
    <citation type="journal article" date="2004" name="Science">
        <title>The Ashbya gossypii genome as a tool for mapping the ancient Saccharomyces cerevisiae genome.</title>
        <authorList>
            <person name="Dietrich F.S."/>
            <person name="Voegeli S."/>
            <person name="Brachat S."/>
            <person name="Lerch A."/>
            <person name="Gates K."/>
            <person name="Steiner S."/>
            <person name="Mohr C."/>
            <person name="Poehlmann R."/>
            <person name="Luedi P."/>
            <person name="Choi S."/>
            <person name="Wing R.A."/>
            <person name="Flavier A."/>
            <person name="Gaffney T.D."/>
            <person name="Philippsen P."/>
        </authorList>
    </citation>
    <scope>NUCLEOTIDE SEQUENCE [LARGE SCALE GENOMIC DNA]</scope>
    <source>
        <strain>ATCC 10895 / CBS 109.51 / FGSC 9923 / NRRL Y-1056</strain>
    </source>
</reference>
<reference key="2">
    <citation type="journal article" date="2013" name="G3 (Bethesda)">
        <title>Genomes of Ashbya fungi isolated from insects reveal four mating-type loci, numerous translocations, lack of transposons, and distinct gene duplications.</title>
        <authorList>
            <person name="Dietrich F.S."/>
            <person name="Voegeli S."/>
            <person name="Kuo S."/>
            <person name="Philippsen P."/>
        </authorList>
    </citation>
    <scope>GENOME REANNOTATION</scope>
    <scope>SEQUENCE REVISION TO 179</scope>
    <source>
        <strain>ATCC 10895 / CBS 109.51 / FGSC 9923 / NRRL Y-1056</strain>
    </source>
</reference>
<dbReference type="EC" id="2.3.2.27"/>
<dbReference type="EMBL" id="AE016816">
    <property type="protein sequence ID" value="AAS51209.2"/>
    <property type="molecule type" value="Genomic_DNA"/>
</dbReference>
<dbReference type="RefSeq" id="NP_983385.2">
    <property type="nucleotide sequence ID" value="NM_208738.2"/>
</dbReference>
<dbReference type="SMR" id="Q75CC8"/>
<dbReference type="FunCoup" id="Q75CC8">
    <property type="interactions" value="250"/>
</dbReference>
<dbReference type="STRING" id="284811.Q75CC8"/>
<dbReference type="EnsemblFungi" id="AAS51209">
    <property type="protein sequence ID" value="AAS51209"/>
    <property type="gene ID" value="AGOS_ACL019C"/>
</dbReference>
<dbReference type="GeneID" id="4619510"/>
<dbReference type="KEGG" id="ago:AGOS_ACL019C"/>
<dbReference type="eggNOG" id="KOG0802">
    <property type="taxonomic scope" value="Eukaryota"/>
</dbReference>
<dbReference type="HOGENOM" id="CLU_026577_0_0_1"/>
<dbReference type="InParanoid" id="Q75CC8"/>
<dbReference type="OMA" id="DICAVHF"/>
<dbReference type="OrthoDB" id="7759664at2759"/>
<dbReference type="UniPathway" id="UPA00143"/>
<dbReference type="Proteomes" id="UP000000591">
    <property type="component" value="Chromosome III"/>
</dbReference>
<dbReference type="GO" id="GO:0012505">
    <property type="term" value="C:endomembrane system"/>
    <property type="evidence" value="ECO:0000318"/>
    <property type="project" value="GO_Central"/>
</dbReference>
<dbReference type="GO" id="GO:0005789">
    <property type="term" value="C:endoplasmic reticulum membrane"/>
    <property type="evidence" value="ECO:0007669"/>
    <property type="project" value="UniProtKB-SubCell"/>
</dbReference>
<dbReference type="GO" id="GO:0061630">
    <property type="term" value="F:ubiquitin protein ligase activity"/>
    <property type="evidence" value="ECO:0000318"/>
    <property type="project" value="GO_Central"/>
</dbReference>
<dbReference type="GO" id="GO:0008270">
    <property type="term" value="F:zinc ion binding"/>
    <property type="evidence" value="ECO:0007669"/>
    <property type="project" value="UniProtKB-KW"/>
</dbReference>
<dbReference type="GO" id="GO:0036503">
    <property type="term" value="P:ERAD pathway"/>
    <property type="evidence" value="ECO:0000318"/>
    <property type="project" value="GO_Central"/>
</dbReference>
<dbReference type="GO" id="GO:0043161">
    <property type="term" value="P:proteasome-mediated ubiquitin-dependent protein catabolic process"/>
    <property type="evidence" value="ECO:0000318"/>
    <property type="project" value="GO_Central"/>
</dbReference>
<dbReference type="GO" id="GO:0016567">
    <property type="term" value="P:protein ubiquitination"/>
    <property type="evidence" value="ECO:0007669"/>
    <property type="project" value="UniProtKB-UniPathway"/>
</dbReference>
<dbReference type="CDD" id="cd16479">
    <property type="entry name" value="RING-H2_synoviolin"/>
    <property type="match status" value="1"/>
</dbReference>
<dbReference type="Gene3D" id="3.30.40.10">
    <property type="entry name" value="Zinc/RING finger domain, C3HC4 (zinc finger)"/>
    <property type="match status" value="1"/>
</dbReference>
<dbReference type="InterPro" id="IPR050731">
    <property type="entry name" value="HRD1_E3_ubiq-ligases"/>
</dbReference>
<dbReference type="InterPro" id="IPR001841">
    <property type="entry name" value="Znf_RING"/>
</dbReference>
<dbReference type="InterPro" id="IPR013083">
    <property type="entry name" value="Znf_RING/FYVE/PHD"/>
</dbReference>
<dbReference type="PANTHER" id="PTHR22763:SF184">
    <property type="entry name" value="E3 UBIQUITIN-PROTEIN LIGASE SYNOVIOLIN"/>
    <property type="match status" value="1"/>
</dbReference>
<dbReference type="PANTHER" id="PTHR22763">
    <property type="entry name" value="RING ZINC FINGER PROTEIN"/>
    <property type="match status" value="1"/>
</dbReference>
<dbReference type="Pfam" id="PF13639">
    <property type="entry name" value="zf-RING_2"/>
    <property type="match status" value="1"/>
</dbReference>
<dbReference type="SMART" id="SM00184">
    <property type="entry name" value="RING"/>
    <property type="match status" value="1"/>
</dbReference>
<dbReference type="SUPFAM" id="SSF57850">
    <property type="entry name" value="RING/U-box"/>
    <property type="match status" value="1"/>
</dbReference>
<dbReference type="PROSITE" id="PS50089">
    <property type="entry name" value="ZF_RING_2"/>
    <property type="match status" value="1"/>
</dbReference>
<name>HRD1_EREGS</name>
<keyword id="KW-0256">Endoplasmic reticulum</keyword>
<keyword id="KW-0472">Membrane</keyword>
<keyword id="KW-0479">Metal-binding</keyword>
<keyword id="KW-1185">Reference proteome</keyword>
<keyword id="KW-0808">Transferase</keyword>
<keyword id="KW-0812">Transmembrane</keyword>
<keyword id="KW-1133">Transmembrane helix</keyword>
<keyword id="KW-0833">Ubl conjugation pathway</keyword>
<keyword id="KW-0862">Zinc</keyword>
<keyword id="KW-0863">Zinc-finger</keyword>